<feature type="chain" id="PRO_0000133953" description="Enolase">
    <location>
        <begin position="1"/>
        <end position="427"/>
    </location>
</feature>
<feature type="active site" description="Proton donor" evidence="1">
    <location>
        <position position="205"/>
    </location>
</feature>
<feature type="active site" description="Proton acceptor" evidence="1">
    <location>
        <position position="337"/>
    </location>
</feature>
<feature type="binding site" evidence="1">
    <location>
        <position position="163"/>
    </location>
    <ligand>
        <name>(2R)-2-phosphoglycerate</name>
        <dbReference type="ChEBI" id="CHEBI:58289"/>
    </ligand>
</feature>
<feature type="binding site" evidence="1">
    <location>
        <position position="242"/>
    </location>
    <ligand>
        <name>Mg(2+)</name>
        <dbReference type="ChEBI" id="CHEBI:18420"/>
    </ligand>
</feature>
<feature type="binding site" evidence="1">
    <location>
        <position position="285"/>
    </location>
    <ligand>
        <name>Mg(2+)</name>
        <dbReference type="ChEBI" id="CHEBI:18420"/>
    </ligand>
</feature>
<feature type="binding site" evidence="1">
    <location>
        <position position="312"/>
    </location>
    <ligand>
        <name>Mg(2+)</name>
        <dbReference type="ChEBI" id="CHEBI:18420"/>
    </ligand>
</feature>
<feature type="binding site" evidence="1">
    <location>
        <position position="337"/>
    </location>
    <ligand>
        <name>(2R)-2-phosphoglycerate</name>
        <dbReference type="ChEBI" id="CHEBI:58289"/>
    </ligand>
</feature>
<feature type="binding site" evidence="1">
    <location>
        <position position="366"/>
    </location>
    <ligand>
        <name>(2R)-2-phosphoglycerate</name>
        <dbReference type="ChEBI" id="CHEBI:58289"/>
    </ligand>
</feature>
<feature type="binding site" evidence="1">
    <location>
        <position position="367"/>
    </location>
    <ligand>
        <name>(2R)-2-phosphoglycerate</name>
        <dbReference type="ChEBI" id="CHEBI:58289"/>
    </ligand>
</feature>
<feature type="binding site" evidence="1">
    <location>
        <position position="388"/>
    </location>
    <ligand>
        <name>(2R)-2-phosphoglycerate</name>
        <dbReference type="ChEBI" id="CHEBI:58289"/>
    </ligand>
</feature>
<evidence type="ECO:0000255" key="1">
    <source>
        <dbReference type="HAMAP-Rule" id="MF_00318"/>
    </source>
</evidence>
<protein>
    <recommendedName>
        <fullName evidence="1">Enolase</fullName>
        <ecNumber evidence="1">4.2.1.11</ecNumber>
    </recommendedName>
    <alternativeName>
        <fullName evidence="1">2-phospho-D-glycerate hydro-lyase</fullName>
    </alternativeName>
    <alternativeName>
        <fullName evidence="1">2-phosphoglycerate dehydratase</fullName>
    </alternativeName>
</protein>
<sequence length="427" mass="45712">MSAIVDIIGREVLDSRGNPTVECDVLLESGVMGRAAVPSGASTGSREAIELRDGDKGRYLGKGVLKAVEHINTEISEAIMGLDASEQAFLDRTLIDLDGTENKGRLGANATLAVSMAVAKAAAEEAGLPLYRYFGGSGAMQMPVPMMNIVNGGAHANNSLDIQEFMVMPVGQQSFREALRCGAEIFHALKKIIADKGMSTAVGDEGGFAPNFASNEECLNTILSAIEKAGYRPGEDVLLALDCAASEFYRDGKYHLDGEGLQLSSVDFANYLANLADKFPIVSIEDGMHESDWDGWKVLTEKLGNKVQLVGDDLFVTNTRILKEGIEKGIANSILIKINQIGTLTETFAAIEMAKRAGYTAVISHRSGETEDSTIADIAVGTNAGQIKTGSLSRSDRIAKYNQLLRIEEDLGDIASYPGKSAFYNLR</sequence>
<dbReference type="EC" id="4.2.1.11" evidence="1"/>
<dbReference type="EMBL" id="AL646052">
    <property type="protein sequence ID" value="CAD14831.1"/>
    <property type="molecule type" value="Genomic_DNA"/>
</dbReference>
<dbReference type="RefSeq" id="WP_011001079.1">
    <property type="nucleotide sequence ID" value="NC_003295.1"/>
</dbReference>
<dbReference type="SMR" id="Q8Y0B5"/>
<dbReference type="STRING" id="267608.RSc1129"/>
<dbReference type="EnsemblBacteria" id="CAD14831">
    <property type="protein sequence ID" value="CAD14831"/>
    <property type="gene ID" value="RSc1129"/>
</dbReference>
<dbReference type="KEGG" id="rso:RSc1129"/>
<dbReference type="eggNOG" id="COG0148">
    <property type="taxonomic scope" value="Bacteria"/>
</dbReference>
<dbReference type="HOGENOM" id="CLU_031223_2_1_4"/>
<dbReference type="UniPathway" id="UPA00109">
    <property type="reaction ID" value="UER00187"/>
</dbReference>
<dbReference type="Proteomes" id="UP000001436">
    <property type="component" value="Chromosome"/>
</dbReference>
<dbReference type="GO" id="GO:0009986">
    <property type="term" value="C:cell surface"/>
    <property type="evidence" value="ECO:0007669"/>
    <property type="project" value="UniProtKB-SubCell"/>
</dbReference>
<dbReference type="GO" id="GO:0005576">
    <property type="term" value="C:extracellular region"/>
    <property type="evidence" value="ECO:0007669"/>
    <property type="project" value="UniProtKB-SubCell"/>
</dbReference>
<dbReference type="GO" id="GO:0000015">
    <property type="term" value="C:phosphopyruvate hydratase complex"/>
    <property type="evidence" value="ECO:0007669"/>
    <property type="project" value="InterPro"/>
</dbReference>
<dbReference type="GO" id="GO:0000287">
    <property type="term" value="F:magnesium ion binding"/>
    <property type="evidence" value="ECO:0007669"/>
    <property type="project" value="UniProtKB-UniRule"/>
</dbReference>
<dbReference type="GO" id="GO:0004634">
    <property type="term" value="F:phosphopyruvate hydratase activity"/>
    <property type="evidence" value="ECO:0007669"/>
    <property type="project" value="UniProtKB-UniRule"/>
</dbReference>
<dbReference type="GO" id="GO:0006096">
    <property type="term" value="P:glycolytic process"/>
    <property type="evidence" value="ECO:0007669"/>
    <property type="project" value="UniProtKB-UniRule"/>
</dbReference>
<dbReference type="CDD" id="cd03313">
    <property type="entry name" value="enolase"/>
    <property type="match status" value="1"/>
</dbReference>
<dbReference type="FunFam" id="3.20.20.120:FF:000001">
    <property type="entry name" value="Enolase"/>
    <property type="match status" value="1"/>
</dbReference>
<dbReference type="FunFam" id="3.30.390.10:FF:000001">
    <property type="entry name" value="Enolase"/>
    <property type="match status" value="1"/>
</dbReference>
<dbReference type="Gene3D" id="3.20.20.120">
    <property type="entry name" value="Enolase-like C-terminal domain"/>
    <property type="match status" value="1"/>
</dbReference>
<dbReference type="Gene3D" id="3.30.390.10">
    <property type="entry name" value="Enolase-like, N-terminal domain"/>
    <property type="match status" value="1"/>
</dbReference>
<dbReference type="HAMAP" id="MF_00318">
    <property type="entry name" value="Enolase"/>
    <property type="match status" value="1"/>
</dbReference>
<dbReference type="InterPro" id="IPR000941">
    <property type="entry name" value="Enolase"/>
</dbReference>
<dbReference type="InterPro" id="IPR036849">
    <property type="entry name" value="Enolase-like_C_sf"/>
</dbReference>
<dbReference type="InterPro" id="IPR029017">
    <property type="entry name" value="Enolase-like_N"/>
</dbReference>
<dbReference type="InterPro" id="IPR020810">
    <property type="entry name" value="Enolase_C"/>
</dbReference>
<dbReference type="InterPro" id="IPR020809">
    <property type="entry name" value="Enolase_CS"/>
</dbReference>
<dbReference type="InterPro" id="IPR020811">
    <property type="entry name" value="Enolase_N"/>
</dbReference>
<dbReference type="NCBIfam" id="TIGR01060">
    <property type="entry name" value="eno"/>
    <property type="match status" value="1"/>
</dbReference>
<dbReference type="PANTHER" id="PTHR11902">
    <property type="entry name" value="ENOLASE"/>
    <property type="match status" value="1"/>
</dbReference>
<dbReference type="PANTHER" id="PTHR11902:SF1">
    <property type="entry name" value="ENOLASE"/>
    <property type="match status" value="1"/>
</dbReference>
<dbReference type="Pfam" id="PF00113">
    <property type="entry name" value="Enolase_C"/>
    <property type="match status" value="1"/>
</dbReference>
<dbReference type="Pfam" id="PF03952">
    <property type="entry name" value="Enolase_N"/>
    <property type="match status" value="1"/>
</dbReference>
<dbReference type="PIRSF" id="PIRSF001400">
    <property type="entry name" value="Enolase"/>
    <property type="match status" value="1"/>
</dbReference>
<dbReference type="PRINTS" id="PR00148">
    <property type="entry name" value="ENOLASE"/>
</dbReference>
<dbReference type="SFLD" id="SFLDS00001">
    <property type="entry name" value="Enolase"/>
    <property type="match status" value="1"/>
</dbReference>
<dbReference type="SFLD" id="SFLDF00002">
    <property type="entry name" value="enolase"/>
    <property type="match status" value="1"/>
</dbReference>
<dbReference type="SMART" id="SM01192">
    <property type="entry name" value="Enolase_C"/>
    <property type="match status" value="1"/>
</dbReference>
<dbReference type="SMART" id="SM01193">
    <property type="entry name" value="Enolase_N"/>
    <property type="match status" value="1"/>
</dbReference>
<dbReference type="SUPFAM" id="SSF51604">
    <property type="entry name" value="Enolase C-terminal domain-like"/>
    <property type="match status" value="1"/>
</dbReference>
<dbReference type="SUPFAM" id="SSF54826">
    <property type="entry name" value="Enolase N-terminal domain-like"/>
    <property type="match status" value="1"/>
</dbReference>
<dbReference type="PROSITE" id="PS00164">
    <property type="entry name" value="ENOLASE"/>
    <property type="match status" value="1"/>
</dbReference>
<proteinExistence type="inferred from homology"/>
<accession>Q8Y0B5</accession>
<reference key="1">
    <citation type="journal article" date="2002" name="Nature">
        <title>Genome sequence of the plant pathogen Ralstonia solanacearum.</title>
        <authorList>
            <person name="Salanoubat M."/>
            <person name="Genin S."/>
            <person name="Artiguenave F."/>
            <person name="Gouzy J."/>
            <person name="Mangenot S."/>
            <person name="Arlat M."/>
            <person name="Billault A."/>
            <person name="Brottier P."/>
            <person name="Camus J.-C."/>
            <person name="Cattolico L."/>
            <person name="Chandler M."/>
            <person name="Choisne N."/>
            <person name="Claudel-Renard C."/>
            <person name="Cunnac S."/>
            <person name="Demange N."/>
            <person name="Gaspin C."/>
            <person name="Lavie M."/>
            <person name="Moisan A."/>
            <person name="Robert C."/>
            <person name="Saurin W."/>
            <person name="Schiex T."/>
            <person name="Siguier P."/>
            <person name="Thebault P."/>
            <person name="Whalen M."/>
            <person name="Wincker P."/>
            <person name="Levy M."/>
            <person name="Weissenbach J."/>
            <person name="Boucher C.A."/>
        </authorList>
    </citation>
    <scope>NUCLEOTIDE SEQUENCE [LARGE SCALE GENOMIC DNA]</scope>
    <source>
        <strain>ATCC BAA-1114 / GMI1000</strain>
    </source>
</reference>
<gene>
    <name evidence="1" type="primary">eno</name>
    <name type="ordered locus">RSc1129</name>
    <name type="ORF">RS04624</name>
</gene>
<organism>
    <name type="scientific">Ralstonia nicotianae (strain ATCC BAA-1114 / GMI1000)</name>
    <name type="common">Ralstonia solanacearum</name>
    <dbReference type="NCBI Taxonomy" id="267608"/>
    <lineage>
        <taxon>Bacteria</taxon>
        <taxon>Pseudomonadati</taxon>
        <taxon>Pseudomonadota</taxon>
        <taxon>Betaproteobacteria</taxon>
        <taxon>Burkholderiales</taxon>
        <taxon>Burkholderiaceae</taxon>
        <taxon>Ralstonia</taxon>
        <taxon>Ralstonia solanacearum species complex</taxon>
    </lineage>
</organism>
<keyword id="KW-0963">Cytoplasm</keyword>
<keyword id="KW-0324">Glycolysis</keyword>
<keyword id="KW-0456">Lyase</keyword>
<keyword id="KW-0460">Magnesium</keyword>
<keyword id="KW-0479">Metal-binding</keyword>
<keyword id="KW-1185">Reference proteome</keyword>
<keyword id="KW-0964">Secreted</keyword>
<name>ENO_RALN1</name>
<comment type="function">
    <text evidence="1">Catalyzes the reversible conversion of 2-phosphoglycerate (2-PG) into phosphoenolpyruvate (PEP). It is essential for the degradation of carbohydrates via glycolysis.</text>
</comment>
<comment type="catalytic activity">
    <reaction evidence="1">
        <text>(2R)-2-phosphoglycerate = phosphoenolpyruvate + H2O</text>
        <dbReference type="Rhea" id="RHEA:10164"/>
        <dbReference type="ChEBI" id="CHEBI:15377"/>
        <dbReference type="ChEBI" id="CHEBI:58289"/>
        <dbReference type="ChEBI" id="CHEBI:58702"/>
        <dbReference type="EC" id="4.2.1.11"/>
    </reaction>
</comment>
<comment type="cofactor">
    <cofactor evidence="1">
        <name>Mg(2+)</name>
        <dbReference type="ChEBI" id="CHEBI:18420"/>
    </cofactor>
    <text evidence="1">Binds a second Mg(2+) ion via substrate during catalysis.</text>
</comment>
<comment type="pathway">
    <text evidence="1">Carbohydrate degradation; glycolysis; pyruvate from D-glyceraldehyde 3-phosphate: step 4/5.</text>
</comment>
<comment type="subcellular location">
    <subcellularLocation>
        <location evidence="1">Cytoplasm</location>
    </subcellularLocation>
    <subcellularLocation>
        <location evidence="1">Secreted</location>
    </subcellularLocation>
    <subcellularLocation>
        <location evidence="1">Cell surface</location>
    </subcellularLocation>
    <text evidence="1">Fractions of enolase are present in both the cytoplasm and on the cell surface.</text>
</comment>
<comment type="similarity">
    <text evidence="1">Belongs to the enolase family.</text>
</comment>